<reference key="1">
    <citation type="journal article" date="1989" name="Mol. Gen. Genet.">
        <title>The complete sequence of the rice (Oryza sativa) chloroplast genome: intermolecular recombination between distinct tRNA genes accounts for a major plastid DNA inversion during the evolution of the cereals.</title>
        <authorList>
            <person name="Hiratsuka J."/>
            <person name="Shimada H."/>
            <person name="Whittier R."/>
            <person name="Ishibashi T."/>
            <person name="Sakamoto M."/>
            <person name="Mori M."/>
            <person name="Kondo C."/>
            <person name="Honji Y."/>
            <person name="Sun C.-R."/>
            <person name="Meng B.-Y."/>
            <person name="Li Y.-Q."/>
            <person name="Kanno A."/>
            <person name="Nishizawa Y."/>
            <person name="Hirai A."/>
            <person name="Shinozaki K."/>
            <person name="Sugiura M."/>
        </authorList>
    </citation>
    <scope>NUCLEOTIDE SEQUENCE [LARGE SCALE GENOMIC DNA]</scope>
    <source>
        <strain>cv. Nipponbare</strain>
    </source>
</reference>
<reference key="2">
    <citation type="journal article" date="2004" name="Plant Physiol.">
        <title>A comparison of rice chloroplast genomes.</title>
        <authorList>
            <person name="Tang J."/>
            <person name="Xia H."/>
            <person name="Cao M."/>
            <person name="Zhang X."/>
            <person name="Zeng W."/>
            <person name="Hu S."/>
            <person name="Tong W."/>
            <person name="Wang J."/>
            <person name="Wang J."/>
            <person name="Yu J."/>
            <person name="Yang H."/>
            <person name="Zhu L."/>
        </authorList>
    </citation>
    <scope>NUCLEOTIDE SEQUENCE [LARGE SCALE GENOMIC DNA]</scope>
    <source>
        <strain>cv. Nipponbare</strain>
    </source>
</reference>
<reference key="3">
    <citation type="journal article" date="2003" name="Science">
        <title>In-depth view of structure, activity, and evolution of rice chromosome 10.</title>
        <authorList>
            <person name="Yu Y."/>
            <person name="Rambo T."/>
            <person name="Currie J."/>
            <person name="Saski C."/>
            <person name="Kim H.-R."/>
            <person name="Collura K."/>
            <person name="Thompson S."/>
            <person name="Simmons J."/>
            <person name="Yang T.-J."/>
            <person name="Nah G."/>
            <person name="Patel A.J."/>
            <person name="Thurmond S."/>
            <person name="Henry D."/>
            <person name="Oates R."/>
            <person name="Palmer M."/>
            <person name="Pries G."/>
            <person name="Gibson J."/>
            <person name="Anderson H."/>
            <person name="Paradkar M."/>
            <person name="Crane L."/>
            <person name="Dale J."/>
            <person name="Carver M.B."/>
            <person name="Wood T."/>
            <person name="Frisch D."/>
            <person name="Engler F."/>
            <person name="Soderlund C."/>
            <person name="Palmer L.E."/>
            <person name="Teytelman L."/>
            <person name="Nascimento L."/>
            <person name="De la Bastide M."/>
            <person name="Spiegel L."/>
            <person name="Ware D."/>
            <person name="O'Shaughnessy A."/>
            <person name="Dike S."/>
            <person name="Dedhia N."/>
            <person name="Preston R."/>
            <person name="Huang E."/>
            <person name="Ferraro K."/>
            <person name="Kuit K."/>
            <person name="Miller B."/>
            <person name="Zutavern T."/>
            <person name="Katzenberger F."/>
            <person name="Muller S."/>
            <person name="Balija V."/>
            <person name="Martienssen R.A."/>
            <person name="Stein L."/>
            <person name="Minx P."/>
            <person name="Johnson D."/>
            <person name="Cordum H."/>
            <person name="Mardis E."/>
            <person name="Cheng Z."/>
            <person name="Jiang J."/>
            <person name="Wilson R."/>
            <person name="McCombie W.R."/>
            <person name="Wing R.A."/>
            <person name="Yuan Q."/>
            <person name="Ouyang S."/>
            <person name="Liu J."/>
            <person name="Jones K.M."/>
            <person name="Gansberger K."/>
            <person name="Moffat K."/>
            <person name="Hill J."/>
            <person name="Tsitrin T."/>
            <person name="Overton L."/>
            <person name="Bera J."/>
            <person name="Kim M."/>
            <person name="Jin S."/>
            <person name="Tallon L."/>
            <person name="Ciecko A."/>
            <person name="Pai G."/>
            <person name="Van Aken S."/>
            <person name="Utterback T."/>
            <person name="Reidmuller S."/>
            <person name="Bormann J."/>
            <person name="Feldblyum T."/>
            <person name="Hsiao J."/>
            <person name="Zismann V."/>
            <person name="Blunt S."/>
            <person name="de Vazeille A.R."/>
            <person name="Shaffer T."/>
            <person name="Koo H."/>
            <person name="Suh B."/>
            <person name="Yang Q."/>
            <person name="Haas B."/>
            <person name="Peterson J."/>
            <person name="Pertea M."/>
            <person name="Volfovsky N."/>
            <person name="Wortman J."/>
            <person name="White O."/>
            <person name="Salzberg S.L."/>
            <person name="Fraser C.M."/>
            <person name="Buell C.R."/>
            <person name="Messing J."/>
            <person name="Song R."/>
            <person name="Fuks G."/>
            <person name="Llaca V."/>
            <person name="Kovchak S."/>
            <person name="Young S."/>
            <person name="Bowers J.E."/>
            <person name="Paterson A.H."/>
            <person name="Johns M.A."/>
            <person name="Mao L."/>
            <person name="Pan H."/>
            <person name="Dean R.A."/>
        </authorList>
    </citation>
    <scope>NUCLEOTIDE SEQUENCE [LARGE SCALE GENOMIC DNA]</scope>
    <source>
        <strain>cv. Nipponbare</strain>
    </source>
</reference>
<feature type="chain" id="PRO_0000289561" description="Photosystem II reaction center protein I">
    <location>
        <begin position="1"/>
        <end position="36"/>
    </location>
</feature>
<feature type="transmembrane region" description="Helical" evidence="1">
    <location>
        <begin position="4"/>
        <end position="24"/>
    </location>
</feature>
<keyword id="KW-0150">Chloroplast</keyword>
<keyword id="KW-0472">Membrane</keyword>
<keyword id="KW-0602">Photosynthesis</keyword>
<keyword id="KW-0604">Photosystem II</keyword>
<keyword id="KW-0934">Plastid</keyword>
<keyword id="KW-0674">Reaction center</keyword>
<keyword id="KW-1185">Reference proteome</keyword>
<keyword id="KW-0793">Thylakoid</keyword>
<keyword id="KW-0812">Transmembrane</keyword>
<keyword id="KW-1133">Transmembrane helix</keyword>
<organism>
    <name type="scientific">Oryza sativa subsp. japonica</name>
    <name type="common">Rice</name>
    <dbReference type="NCBI Taxonomy" id="39947"/>
    <lineage>
        <taxon>Eukaryota</taxon>
        <taxon>Viridiplantae</taxon>
        <taxon>Streptophyta</taxon>
        <taxon>Embryophyta</taxon>
        <taxon>Tracheophyta</taxon>
        <taxon>Spermatophyta</taxon>
        <taxon>Magnoliopsida</taxon>
        <taxon>Liliopsida</taxon>
        <taxon>Poales</taxon>
        <taxon>Poaceae</taxon>
        <taxon>BOP clade</taxon>
        <taxon>Oryzoideae</taxon>
        <taxon>Oryzeae</taxon>
        <taxon>Oryzinae</taxon>
        <taxon>Oryza</taxon>
        <taxon>Oryza sativa</taxon>
    </lineage>
</organism>
<protein>
    <recommendedName>
        <fullName evidence="1">Photosystem II reaction center protein I</fullName>
        <shortName evidence="1">PSII-I</shortName>
    </recommendedName>
    <alternativeName>
        <fullName evidence="1">PSII 4.8 kDa protein</fullName>
    </alternativeName>
</protein>
<evidence type="ECO:0000255" key="1">
    <source>
        <dbReference type="HAMAP-Rule" id="MF_01316"/>
    </source>
</evidence>
<evidence type="ECO:0000305" key="2"/>
<accession>P0C407</accession>
<accession>P12161</accession>
<accession>Q6QY87</accession>
<accession>Q7G1Q3</accession>
<accession>Q7G7J7</accession>
<comment type="function">
    <text evidence="1">One of the components of the core complex of photosystem II (PSII), required for its stability and/or assembly. PSII is a light-driven water:plastoquinone oxidoreductase that uses light energy to abstract electrons from H(2)O, generating O(2) and a proton gradient subsequently used for ATP formation. It consists of a core antenna complex that captures photons, and an electron transfer chain that converts photonic excitation into a charge separation.</text>
</comment>
<comment type="subunit">
    <text evidence="1">PSII is composed of 1 copy each of membrane proteins PsbA, PsbB, PsbC, PsbD, PsbE, PsbF, PsbH, PsbI, PsbJ, PsbK, PsbL, PsbM, PsbT, PsbX, PsbY, PsbZ, Psb30/Ycf12, at least 3 peripheral proteins of the oxygen-evolving complex and a large number of cofactors. It forms dimeric complexes.</text>
</comment>
<comment type="subcellular location">
    <subcellularLocation>
        <location evidence="1">Plastid</location>
        <location evidence="1">Chloroplast thylakoid membrane</location>
        <topology evidence="1">Single-pass membrane protein</topology>
    </subcellularLocation>
</comment>
<comment type="similarity">
    <text evidence="1">Belongs to the PsbI family.</text>
</comment>
<comment type="caution">
    <text evidence="2">A stretch of the chloroplast genome is duplicated within chromosome 10 resulting in the duplication of the gene. The expression of this duplicated gene has not been demonstrated.</text>
</comment>
<gene>
    <name evidence="1" type="primary">psbI</name>
    <name type="ORF">Nip012</name>
</gene>
<sequence length="36" mass="4154">MLTLKLFVYTVVIFFVSLFIFGFLSNDPGRNPGRDE</sequence>
<dbReference type="EMBL" id="X15901">
    <property type="protein sequence ID" value="CAA34011.1"/>
    <property type="molecule type" value="Genomic_DNA"/>
</dbReference>
<dbReference type="EMBL" id="AY522330">
    <property type="protein sequence ID" value="AAS46107.1"/>
    <property type="molecule type" value="Genomic_DNA"/>
</dbReference>
<dbReference type="EMBL" id="AC087599">
    <property type="protein sequence ID" value="AAL79694.1"/>
    <property type="molecule type" value="Genomic_DNA"/>
</dbReference>
<dbReference type="PIR" id="JQ0204">
    <property type="entry name" value="F2RZI"/>
</dbReference>
<dbReference type="RefSeq" id="NP_039364.1">
    <property type="nucleotide sequence ID" value="NC_001320.1"/>
</dbReference>
<dbReference type="RefSeq" id="YP_009305288.1">
    <property type="nucleotide sequence ID" value="NC_031333.1"/>
</dbReference>
<dbReference type="SMR" id="P0C407"/>
<dbReference type="FunCoup" id="P0C407">
    <property type="interactions" value="63"/>
</dbReference>
<dbReference type="STRING" id="39947.P0C407"/>
<dbReference type="PaxDb" id="39947-P0C407"/>
<dbReference type="EnsemblPlants" id="transcript-psbI">
    <property type="protein sequence ID" value="cds-CAA34011.1"/>
    <property type="gene ID" value="gene-psbI"/>
</dbReference>
<dbReference type="GeneID" id="29141334"/>
<dbReference type="GeneID" id="3131416"/>
<dbReference type="Gramene" id="transcript-psbI">
    <property type="protein sequence ID" value="cds-CAA34011.1"/>
    <property type="gene ID" value="gene-psbI"/>
</dbReference>
<dbReference type="KEGG" id="dosa:psbI"/>
<dbReference type="KEGG" id="osa:3131416"/>
<dbReference type="eggNOG" id="ENOG502SEUZ">
    <property type="taxonomic scope" value="Eukaryota"/>
</dbReference>
<dbReference type="InParanoid" id="P0C407"/>
<dbReference type="OrthoDB" id="1855836at2759"/>
<dbReference type="Proteomes" id="UP000000763">
    <property type="component" value="Chromosome 10"/>
</dbReference>
<dbReference type="Proteomes" id="UP000059680">
    <property type="component" value="Chloroplast"/>
</dbReference>
<dbReference type="GO" id="GO:0009535">
    <property type="term" value="C:chloroplast thylakoid membrane"/>
    <property type="evidence" value="ECO:0007669"/>
    <property type="project" value="UniProtKB-SubCell"/>
</dbReference>
<dbReference type="GO" id="GO:0009539">
    <property type="term" value="C:photosystem II reaction center"/>
    <property type="evidence" value="ECO:0007669"/>
    <property type="project" value="InterPro"/>
</dbReference>
<dbReference type="GO" id="GO:0009536">
    <property type="term" value="C:plastid"/>
    <property type="evidence" value="ECO:0000305"/>
    <property type="project" value="Gramene"/>
</dbReference>
<dbReference type="GO" id="GO:0015979">
    <property type="term" value="P:photosynthesis"/>
    <property type="evidence" value="ECO:0007669"/>
    <property type="project" value="UniProtKB-UniRule"/>
</dbReference>
<dbReference type="HAMAP" id="MF_01316">
    <property type="entry name" value="PSII_PsbI"/>
    <property type="match status" value="1"/>
</dbReference>
<dbReference type="InterPro" id="IPR003686">
    <property type="entry name" value="PSII_PsbI"/>
</dbReference>
<dbReference type="InterPro" id="IPR037271">
    <property type="entry name" value="PSII_PsbI_sf"/>
</dbReference>
<dbReference type="NCBIfam" id="NF002735">
    <property type="entry name" value="PRK02655.1"/>
    <property type="match status" value="1"/>
</dbReference>
<dbReference type="PANTHER" id="PTHR35772">
    <property type="entry name" value="PHOTOSYSTEM II REACTION CENTER PROTEIN I"/>
    <property type="match status" value="1"/>
</dbReference>
<dbReference type="PANTHER" id="PTHR35772:SF1">
    <property type="entry name" value="PHOTOSYSTEM II REACTION CENTER PROTEIN I"/>
    <property type="match status" value="1"/>
</dbReference>
<dbReference type="Pfam" id="PF02532">
    <property type="entry name" value="PsbI"/>
    <property type="match status" value="1"/>
</dbReference>
<dbReference type="SUPFAM" id="SSF161041">
    <property type="entry name" value="Photosystem II reaction center protein I, PsbI"/>
    <property type="match status" value="1"/>
</dbReference>
<name>PSBI_ORYSJ</name>
<geneLocation type="chloroplast"/>
<proteinExistence type="inferred from homology"/>